<feature type="chain" id="PRO_1000010968" description="Iron-sulfur cluster assembly protein CyaY">
    <location>
        <begin position="1"/>
        <end position="106"/>
    </location>
</feature>
<comment type="function">
    <text evidence="1">Involved in iron-sulfur (Fe-S) cluster assembly. May act as a regulator of Fe-S biogenesis.</text>
</comment>
<comment type="similarity">
    <text evidence="1">Belongs to the frataxin family.</text>
</comment>
<dbReference type="EMBL" id="CP000305">
    <property type="protein sequence ID" value="ABG16450.1"/>
    <property type="molecule type" value="Genomic_DNA"/>
</dbReference>
<dbReference type="EMBL" id="ACNQ01000001">
    <property type="protein sequence ID" value="EEO78560.1"/>
    <property type="molecule type" value="Genomic_DNA"/>
</dbReference>
<dbReference type="RefSeq" id="WP_002211469.1">
    <property type="nucleotide sequence ID" value="NZ_ACNQ01000001.1"/>
</dbReference>
<dbReference type="SMR" id="Q1CNI0"/>
<dbReference type="GeneID" id="57974862"/>
<dbReference type="KEGG" id="ypn:YPN_0117"/>
<dbReference type="HOGENOM" id="CLU_080880_3_0_6"/>
<dbReference type="Proteomes" id="UP000008936">
    <property type="component" value="Chromosome"/>
</dbReference>
<dbReference type="GO" id="GO:0005829">
    <property type="term" value="C:cytosol"/>
    <property type="evidence" value="ECO:0007669"/>
    <property type="project" value="TreeGrafter"/>
</dbReference>
<dbReference type="GO" id="GO:0008199">
    <property type="term" value="F:ferric iron binding"/>
    <property type="evidence" value="ECO:0007669"/>
    <property type="project" value="InterPro"/>
</dbReference>
<dbReference type="GO" id="GO:0008198">
    <property type="term" value="F:ferrous iron binding"/>
    <property type="evidence" value="ECO:0007669"/>
    <property type="project" value="TreeGrafter"/>
</dbReference>
<dbReference type="GO" id="GO:0016226">
    <property type="term" value="P:iron-sulfur cluster assembly"/>
    <property type="evidence" value="ECO:0007669"/>
    <property type="project" value="UniProtKB-UniRule"/>
</dbReference>
<dbReference type="CDD" id="cd00503">
    <property type="entry name" value="Frataxin"/>
    <property type="match status" value="1"/>
</dbReference>
<dbReference type="FunFam" id="3.30.920.10:FF:000001">
    <property type="entry name" value="Iron-sulfur cluster assembly protein CyaY"/>
    <property type="match status" value="1"/>
</dbReference>
<dbReference type="Gene3D" id="3.30.920.10">
    <property type="entry name" value="Frataxin/CyaY"/>
    <property type="match status" value="1"/>
</dbReference>
<dbReference type="HAMAP" id="MF_00142">
    <property type="entry name" value="CyaY"/>
    <property type="match status" value="1"/>
</dbReference>
<dbReference type="InterPro" id="IPR047584">
    <property type="entry name" value="CyaY"/>
</dbReference>
<dbReference type="InterPro" id="IPR002908">
    <property type="entry name" value="Frataxin/CyaY"/>
</dbReference>
<dbReference type="InterPro" id="IPR036524">
    <property type="entry name" value="Frataxin/CyaY_sf"/>
</dbReference>
<dbReference type="InterPro" id="IPR020895">
    <property type="entry name" value="Frataxin_CS"/>
</dbReference>
<dbReference type="NCBIfam" id="TIGR03421">
    <property type="entry name" value="FeS_CyaY"/>
    <property type="match status" value="1"/>
</dbReference>
<dbReference type="PANTHER" id="PTHR16821">
    <property type="entry name" value="FRATAXIN"/>
    <property type="match status" value="1"/>
</dbReference>
<dbReference type="PANTHER" id="PTHR16821:SF2">
    <property type="entry name" value="FRATAXIN, MITOCHONDRIAL"/>
    <property type="match status" value="1"/>
</dbReference>
<dbReference type="Pfam" id="PF01491">
    <property type="entry name" value="Frataxin_Cyay"/>
    <property type="match status" value="1"/>
</dbReference>
<dbReference type="SMART" id="SM01219">
    <property type="entry name" value="Frataxin_Cyay"/>
    <property type="match status" value="1"/>
</dbReference>
<dbReference type="SUPFAM" id="SSF55387">
    <property type="entry name" value="Frataxin/Nqo15-like"/>
    <property type="match status" value="1"/>
</dbReference>
<dbReference type="PROSITE" id="PS01344">
    <property type="entry name" value="FRATAXIN_1"/>
    <property type="match status" value="1"/>
</dbReference>
<dbReference type="PROSITE" id="PS50810">
    <property type="entry name" value="FRATAXIN_2"/>
    <property type="match status" value="1"/>
</dbReference>
<keyword id="KW-0408">Iron</keyword>
<keyword id="KW-0479">Metal-binding</keyword>
<name>CYAY_YERPN</name>
<reference key="1">
    <citation type="journal article" date="2006" name="J. Bacteriol.">
        <title>Complete genome sequence of Yersinia pestis strains Antiqua and Nepal516: evidence of gene reduction in an emerging pathogen.</title>
        <authorList>
            <person name="Chain P.S.G."/>
            <person name="Hu P."/>
            <person name="Malfatti S.A."/>
            <person name="Radnedge L."/>
            <person name="Larimer F."/>
            <person name="Vergez L.M."/>
            <person name="Worsham P."/>
            <person name="Chu M.C."/>
            <person name="Andersen G.L."/>
        </authorList>
    </citation>
    <scope>NUCLEOTIDE SEQUENCE [LARGE SCALE GENOMIC DNA]</scope>
    <source>
        <strain>Nepal516</strain>
    </source>
</reference>
<reference key="2">
    <citation type="submission" date="2009-04" db="EMBL/GenBank/DDBJ databases">
        <title>Yersinia pestis Nepal516A whole genome shotgun sequencing project.</title>
        <authorList>
            <person name="Plunkett G. III"/>
            <person name="Anderson B.D."/>
            <person name="Baumler D.J."/>
            <person name="Burland V."/>
            <person name="Cabot E.L."/>
            <person name="Glasner J.D."/>
            <person name="Mau B."/>
            <person name="Neeno-Eckwall E."/>
            <person name="Perna N.T."/>
            <person name="Munk A.C."/>
            <person name="Tapia R."/>
            <person name="Green L.D."/>
            <person name="Rogers Y.C."/>
            <person name="Detter J.C."/>
            <person name="Bruce D.C."/>
            <person name="Brettin T.S."/>
        </authorList>
    </citation>
    <scope>NUCLEOTIDE SEQUENCE [LARGE SCALE GENOMIC DNA]</scope>
    <source>
        <strain>Nepal516</strain>
    </source>
</reference>
<protein>
    <recommendedName>
        <fullName evidence="1">Iron-sulfur cluster assembly protein CyaY</fullName>
    </recommendedName>
</protein>
<proteinExistence type="inferred from homology"/>
<evidence type="ECO:0000255" key="1">
    <source>
        <dbReference type="HAMAP-Rule" id="MF_00142"/>
    </source>
</evidence>
<organism>
    <name type="scientific">Yersinia pestis bv. Antiqua (strain Nepal516)</name>
    <dbReference type="NCBI Taxonomy" id="377628"/>
    <lineage>
        <taxon>Bacteria</taxon>
        <taxon>Pseudomonadati</taxon>
        <taxon>Pseudomonadota</taxon>
        <taxon>Gammaproteobacteria</taxon>
        <taxon>Enterobacterales</taxon>
        <taxon>Yersiniaceae</taxon>
        <taxon>Yersinia</taxon>
    </lineage>
</organism>
<sequence>MNDSEFHQLADQLMLYIEETLDSFTGDSDIDYETNGGVMTLTFENGSKIVINRQEPLHQVWLATKAGGYHFNYRDGHWYCSRSGEEFLAKLSEAASAQAGENVSFG</sequence>
<accession>Q1CNI0</accession>
<accession>D1Q106</accession>
<gene>
    <name evidence="1" type="primary">cyaY</name>
    <name type="ordered locus">YPN_0117</name>
    <name type="ORF">YP516_0078</name>
</gene>